<protein>
    <recommendedName>
        <fullName>26S proteasome regulatory subunit 7</fullName>
    </recommendedName>
    <alternativeName>
        <fullName>26S proteasome AAA-ATPase subunit RPT1</fullName>
    </alternativeName>
    <alternativeName>
        <fullName>Proteasome 26S subunit ATPase 2</fullName>
    </alternativeName>
    <alternativeName>
        <fullName evidence="4">xMSS1</fullName>
    </alternativeName>
</protein>
<name>PRS7_XENLA</name>
<gene>
    <name type="primary">psmc2</name>
    <name evidence="4" type="synonym">mss1</name>
</gene>
<reference key="1">
    <citation type="journal article" date="1995" name="Biochim. Biophys. Acta">
        <title>A homologue of the human MSS1 gene, a positive modulator of HIV-1 gene expression, is massively expressed in Xenopus oocytes.</title>
        <authorList>
            <person name="Nacken W.K.F."/>
            <person name="Kingsman A."/>
            <person name="Kingsman S."/>
            <person name="Sablitzky F."/>
            <person name="Sorg C."/>
        </authorList>
    </citation>
    <scope>NUCLEOTIDE SEQUENCE [MRNA]</scope>
    <source>
        <tissue>Ovary</tissue>
    </source>
</reference>
<reference key="2">
    <citation type="submission" date="2003-06" db="EMBL/GenBank/DDBJ databases">
        <authorList>
            <consortium name="NIH - Xenopus Gene Collection (XGC) project"/>
        </authorList>
    </citation>
    <scope>NUCLEOTIDE SEQUENCE [LARGE SCALE MRNA]</scope>
</reference>
<organism>
    <name type="scientific">Xenopus laevis</name>
    <name type="common">African clawed frog</name>
    <dbReference type="NCBI Taxonomy" id="8355"/>
    <lineage>
        <taxon>Eukaryota</taxon>
        <taxon>Metazoa</taxon>
        <taxon>Chordata</taxon>
        <taxon>Craniata</taxon>
        <taxon>Vertebrata</taxon>
        <taxon>Euteleostomi</taxon>
        <taxon>Amphibia</taxon>
        <taxon>Batrachia</taxon>
        <taxon>Anura</taxon>
        <taxon>Pipoidea</taxon>
        <taxon>Pipidae</taxon>
        <taxon>Xenopodinae</taxon>
        <taxon>Xenopus</taxon>
        <taxon>Xenopus</taxon>
    </lineage>
</organism>
<accession>P46472</accession>
<accession>Q5D088</accession>
<keyword id="KW-0067">ATP-binding</keyword>
<keyword id="KW-0963">Cytoplasm</keyword>
<keyword id="KW-0547">Nucleotide-binding</keyword>
<keyword id="KW-0539">Nucleus</keyword>
<keyword id="KW-0597">Phosphoprotein</keyword>
<keyword id="KW-0647">Proteasome</keyword>
<keyword id="KW-1185">Reference proteome</keyword>
<evidence type="ECO:0000250" key="1">
    <source>
        <dbReference type="UniProtKB" id="P35998"/>
    </source>
</evidence>
<evidence type="ECO:0000255" key="2"/>
<evidence type="ECO:0000256" key="3">
    <source>
        <dbReference type="SAM" id="MobiDB-lite"/>
    </source>
</evidence>
<evidence type="ECO:0000303" key="4">
    <source>
    </source>
</evidence>
<evidence type="ECO:0000305" key="5"/>
<sequence>MPDYLGADQRKTKEEEKEDKPIRSLDEGDIALLKTYGQSTYSRQIKQVEDDIQQLLKKINELTGIKESDTGLAPPALWDLAADKQTLQSEQPLQVARCTKIINADSEDPKYIINVKQFAKFVVDLSDQVAPTDIEEGMRVGVDRNKYQIHIPLPPKIDPTVTMMQVEEKPDVTYSDVGGCKEQIEKLREVVETPLLHPERFVNLGIEPPKGVLLFGPPGTGKTLCARAVANRTDACFIRVIGSELVQKYVGEGARMVRELFEMARTKKACLIFFDEIDAIGGARFDDGAGGDNEVQRTMLELINQLDGFDPRGNIKVLMATNRPDTLDPALMRPGRLDRKIEFSLPDLEGRTHIFKIHARSMSVERDIRFELLARLCPNSTGAEIRSVCTEAGMFAIRARRKVATEKDFLEAVNKVIKSYAKFSATPRYMTYN</sequence>
<proteinExistence type="evidence at transcript level"/>
<comment type="function">
    <text evidence="1">The 26S proteasome is involved in the ATP-dependent degradation of ubiquitinated proteins. The regulatory (or ATPase) complex confers ATP dependency and substrate specificity to the 26S complex (By similarity).</text>
</comment>
<comment type="subcellular location">
    <subcellularLocation>
        <location evidence="1">Cytoplasm</location>
    </subcellularLocation>
    <subcellularLocation>
        <location evidence="1">Nucleus</location>
    </subcellularLocation>
</comment>
<comment type="PTM">
    <text evidence="1">Phosphorylated. Dephosphorylated by ublcp1 which impairs psmc2 ATPase activity and disrupts 26S proteasome assembly.</text>
</comment>
<comment type="similarity">
    <text evidence="5">Belongs to the AAA ATPase family.</text>
</comment>
<feature type="chain" id="PRO_0000084712" description="26S proteasome regulatory subunit 7">
    <location>
        <begin position="1"/>
        <end position="433"/>
    </location>
</feature>
<feature type="region of interest" description="Disordered" evidence="3">
    <location>
        <begin position="1"/>
        <end position="23"/>
    </location>
</feature>
<feature type="compositionally biased region" description="Basic and acidic residues" evidence="3">
    <location>
        <begin position="8"/>
        <end position="23"/>
    </location>
</feature>
<feature type="binding site" evidence="2">
    <location>
        <begin position="216"/>
        <end position="223"/>
    </location>
    <ligand>
        <name>ATP</name>
        <dbReference type="ChEBI" id="CHEBI:30616"/>
    </ligand>
</feature>
<dbReference type="EMBL" id="X80157">
    <property type="protein sequence ID" value="CAA56438.1"/>
    <property type="molecule type" value="mRNA"/>
</dbReference>
<dbReference type="EMBL" id="BC054143">
    <property type="protein sequence ID" value="AAH54143.1"/>
    <property type="molecule type" value="mRNA"/>
</dbReference>
<dbReference type="PIR" id="S53709">
    <property type="entry name" value="S53709"/>
</dbReference>
<dbReference type="RefSeq" id="NP_001084136.1">
    <property type="nucleotide sequence ID" value="NM_001090667.1"/>
</dbReference>
<dbReference type="SMR" id="P46472"/>
<dbReference type="BioGRID" id="100652">
    <property type="interactions" value="2"/>
</dbReference>
<dbReference type="DNASU" id="399327"/>
<dbReference type="GeneID" id="399327"/>
<dbReference type="KEGG" id="xla:399327"/>
<dbReference type="AGR" id="Xenbase:XB-GENE-1000023"/>
<dbReference type="CTD" id="399327"/>
<dbReference type="Xenbase" id="XB-GENE-1000023">
    <property type="gene designation" value="psmc2.L"/>
</dbReference>
<dbReference type="OMA" id="RSKYHIE"/>
<dbReference type="OrthoDB" id="1664597at2759"/>
<dbReference type="Proteomes" id="UP000186698">
    <property type="component" value="Chromosome 3L"/>
</dbReference>
<dbReference type="Bgee" id="399327">
    <property type="expression patterns" value="Expressed in muscle tissue and 19 other cell types or tissues"/>
</dbReference>
<dbReference type="GO" id="GO:0005737">
    <property type="term" value="C:cytoplasm"/>
    <property type="evidence" value="ECO:0007669"/>
    <property type="project" value="UniProtKB-SubCell"/>
</dbReference>
<dbReference type="GO" id="GO:0005634">
    <property type="term" value="C:nucleus"/>
    <property type="evidence" value="ECO:0007669"/>
    <property type="project" value="UniProtKB-SubCell"/>
</dbReference>
<dbReference type="GO" id="GO:0022624">
    <property type="term" value="C:proteasome accessory complex"/>
    <property type="evidence" value="ECO:0000250"/>
    <property type="project" value="UniProtKB"/>
</dbReference>
<dbReference type="GO" id="GO:0000502">
    <property type="term" value="C:proteasome complex"/>
    <property type="evidence" value="ECO:0000250"/>
    <property type="project" value="UniProtKB"/>
</dbReference>
<dbReference type="GO" id="GO:0008540">
    <property type="term" value="C:proteasome regulatory particle, base subcomplex"/>
    <property type="evidence" value="ECO:0000318"/>
    <property type="project" value="GO_Central"/>
</dbReference>
<dbReference type="GO" id="GO:0005524">
    <property type="term" value="F:ATP binding"/>
    <property type="evidence" value="ECO:0007669"/>
    <property type="project" value="UniProtKB-KW"/>
</dbReference>
<dbReference type="GO" id="GO:0016887">
    <property type="term" value="F:ATP hydrolysis activity"/>
    <property type="evidence" value="ECO:0007669"/>
    <property type="project" value="InterPro"/>
</dbReference>
<dbReference type="GO" id="GO:0036402">
    <property type="term" value="F:proteasome-activating activity"/>
    <property type="evidence" value="ECO:0000250"/>
    <property type="project" value="UniProtKB"/>
</dbReference>
<dbReference type="GO" id="GO:0043161">
    <property type="term" value="P:proteasome-mediated ubiquitin-dependent protein catabolic process"/>
    <property type="evidence" value="ECO:0000318"/>
    <property type="project" value="GO_Central"/>
</dbReference>
<dbReference type="GO" id="GO:0006511">
    <property type="term" value="P:ubiquitin-dependent protein catabolic process"/>
    <property type="evidence" value="ECO:0000250"/>
    <property type="project" value="UniProtKB"/>
</dbReference>
<dbReference type="CDD" id="cd19502">
    <property type="entry name" value="RecA-like_PAN_like"/>
    <property type="match status" value="1"/>
</dbReference>
<dbReference type="FunFam" id="1.10.8.60:FF:000005">
    <property type="entry name" value="26S protease regulatory subunit 7"/>
    <property type="match status" value="1"/>
</dbReference>
<dbReference type="FunFam" id="2.40.50.140:FF:000075">
    <property type="entry name" value="26S protease regulatory subunit 7"/>
    <property type="match status" value="1"/>
</dbReference>
<dbReference type="FunFam" id="3.40.50.300:FF:000027">
    <property type="entry name" value="26S protease regulatory subunit 7"/>
    <property type="match status" value="1"/>
</dbReference>
<dbReference type="Gene3D" id="1.10.8.60">
    <property type="match status" value="1"/>
</dbReference>
<dbReference type="Gene3D" id="2.40.50.140">
    <property type="entry name" value="Nucleic acid-binding proteins"/>
    <property type="match status" value="1"/>
</dbReference>
<dbReference type="Gene3D" id="3.40.50.300">
    <property type="entry name" value="P-loop containing nucleotide triphosphate hydrolases"/>
    <property type="match status" value="1"/>
</dbReference>
<dbReference type="InterPro" id="IPR050221">
    <property type="entry name" value="26S_Proteasome_ATPase"/>
</dbReference>
<dbReference type="InterPro" id="IPR003593">
    <property type="entry name" value="AAA+_ATPase"/>
</dbReference>
<dbReference type="InterPro" id="IPR041569">
    <property type="entry name" value="AAA_lid_3"/>
</dbReference>
<dbReference type="InterPro" id="IPR003959">
    <property type="entry name" value="ATPase_AAA_core"/>
</dbReference>
<dbReference type="InterPro" id="IPR003960">
    <property type="entry name" value="ATPase_AAA_CS"/>
</dbReference>
<dbReference type="InterPro" id="IPR012340">
    <property type="entry name" value="NA-bd_OB-fold"/>
</dbReference>
<dbReference type="InterPro" id="IPR027417">
    <property type="entry name" value="P-loop_NTPase"/>
</dbReference>
<dbReference type="InterPro" id="IPR048723">
    <property type="entry name" value="PRS7-like_OB"/>
</dbReference>
<dbReference type="PANTHER" id="PTHR23073">
    <property type="entry name" value="26S PROTEASOME REGULATORY SUBUNIT"/>
    <property type="match status" value="1"/>
</dbReference>
<dbReference type="Pfam" id="PF00004">
    <property type="entry name" value="AAA"/>
    <property type="match status" value="1"/>
</dbReference>
<dbReference type="Pfam" id="PF17862">
    <property type="entry name" value="AAA_lid_3"/>
    <property type="match status" value="1"/>
</dbReference>
<dbReference type="Pfam" id="PF21236">
    <property type="entry name" value="PRS7_OB"/>
    <property type="match status" value="1"/>
</dbReference>
<dbReference type="SMART" id="SM00382">
    <property type="entry name" value="AAA"/>
    <property type="match status" value="1"/>
</dbReference>
<dbReference type="SUPFAM" id="SSF52540">
    <property type="entry name" value="P-loop containing nucleoside triphosphate hydrolases"/>
    <property type="match status" value="1"/>
</dbReference>
<dbReference type="PROSITE" id="PS00674">
    <property type="entry name" value="AAA"/>
    <property type="match status" value="1"/>
</dbReference>